<keyword id="KW-0001">2Fe-2S</keyword>
<keyword id="KW-0004">4Fe-4S</keyword>
<keyword id="KW-0963">Cytoplasm</keyword>
<keyword id="KW-0408">Iron</keyword>
<keyword id="KW-0411">Iron-sulfur</keyword>
<keyword id="KW-0479">Metal-binding</keyword>
<keyword id="KW-0496">Mitochondrion</keyword>
<protein>
    <recommendedName>
        <fullName evidence="1">Fe-S cluster assembly protein DRE2</fullName>
    </recommendedName>
    <alternativeName>
        <fullName evidence="1">Anamorsin homolog</fullName>
    </alternativeName>
</protein>
<evidence type="ECO:0000255" key="1">
    <source>
        <dbReference type="HAMAP-Rule" id="MF_03115"/>
    </source>
</evidence>
<evidence type="ECO:0000256" key="2">
    <source>
        <dbReference type="SAM" id="MobiDB-lite"/>
    </source>
</evidence>
<feature type="chain" id="PRO_0000410007" description="Fe-S cluster assembly protein DRE2">
    <location>
        <begin position="1"/>
        <end position="321"/>
    </location>
</feature>
<feature type="region of interest" description="N-terminal SAM-like domain" evidence="1">
    <location>
        <begin position="1"/>
        <end position="161"/>
    </location>
</feature>
<feature type="region of interest" description="Disordered" evidence="2">
    <location>
        <begin position="123"/>
        <end position="168"/>
    </location>
</feature>
<feature type="region of interest" description="Linker" evidence="1">
    <location>
        <begin position="162"/>
        <end position="197"/>
    </location>
</feature>
<feature type="region of interest" description="Fe-S binding site A" evidence="1">
    <location>
        <begin position="203"/>
        <end position="224"/>
    </location>
</feature>
<feature type="region of interest" description="Fe-S binding site B" evidence="1">
    <location>
        <begin position="285"/>
        <end position="299"/>
    </location>
</feature>
<feature type="short sequence motif" description="Cx2C motif 1" evidence="1">
    <location>
        <begin position="285"/>
        <end position="288"/>
    </location>
</feature>
<feature type="short sequence motif" description="Cx2C motif 2" evidence="1">
    <location>
        <begin position="296"/>
        <end position="299"/>
    </location>
</feature>
<feature type="compositionally biased region" description="Low complexity" evidence="2">
    <location>
        <begin position="139"/>
        <end position="156"/>
    </location>
</feature>
<feature type="binding site" evidence="1">
    <location>
        <position position="203"/>
    </location>
    <ligand>
        <name>[2Fe-2S] cluster</name>
        <dbReference type="ChEBI" id="CHEBI:190135"/>
    </ligand>
</feature>
<feature type="binding site" evidence="1">
    <location>
        <position position="219"/>
    </location>
    <ligand>
        <name>[2Fe-2S] cluster</name>
        <dbReference type="ChEBI" id="CHEBI:190135"/>
    </ligand>
</feature>
<feature type="binding site" evidence="1">
    <location>
        <position position="222"/>
    </location>
    <ligand>
        <name>[2Fe-2S] cluster</name>
        <dbReference type="ChEBI" id="CHEBI:190135"/>
    </ligand>
</feature>
<feature type="binding site" evidence="1">
    <location>
        <position position="224"/>
    </location>
    <ligand>
        <name>[2Fe-2S] cluster</name>
        <dbReference type="ChEBI" id="CHEBI:190135"/>
    </ligand>
</feature>
<feature type="binding site" evidence="1">
    <location>
        <position position="285"/>
    </location>
    <ligand>
        <name>[4Fe-4S] cluster</name>
        <dbReference type="ChEBI" id="CHEBI:49883"/>
    </ligand>
</feature>
<feature type="binding site" evidence="1">
    <location>
        <position position="288"/>
    </location>
    <ligand>
        <name>[4Fe-4S] cluster</name>
        <dbReference type="ChEBI" id="CHEBI:49883"/>
    </ligand>
</feature>
<feature type="binding site" evidence="1">
    <location>
        <position position="296"/>
    </location>
    <ligand>
        <name>[4Fe-4S] cluster</name>
        <dbReference type="ChEBI" id="CHEBI:49883"/>
    </ligand>
</feature>
<feature type="binding site" evidence="1">
    <location>
        <position position="299"/>
    </location>
    <ligand>
        <name>[4Fe-4S] cluster</name>
        <dbReference type="ChEBI" id="CHEBI:49883"/>
    </ligand>
</feature>
<reference key="1">
    <citation type="journal article" date="2005" name="Science">
        <title>The genome of the basidiomycetous yeast and human pathogen Cryptococcus neoformans.</title>
        <authorList>
            <person name="Loftus B.J."/>
            <person name="Fung E."/>
            <person name="Roncaglia P."/>
            <person name="Rowley D."/>
            <person name="Amedeo P."/>
            <person name="Bruno D."/>
            <person name="Vamathevan J."/>
            <person name="Miranda M."/>
            <person name="Anderson I.J."/>
            <person name="Fraser J.A."/>
            <person name="Allen J.E."/>
            <person name="Bosdet I.E."/>
            <person name="Brent M.R."/>
            <person name="Chiu R."/>
            <person name="Doering T.L."/>
            <person name="Donlin M.J."/>
            <person name="D'Souza C.A."/>
            <person name="Fox D.S."/>
            <person name="Grinberg V."/>
            <person name="Fu J."/>
            <person name="Fukushima M."/>
            <person name="Haas B.J."/>
            <person name="Huang J.C."/>
            <person name="Janbon G."/>
            <person name="Jones S.J.M."/>
            <person name="Koo H.L."/>
            <person name="Krzywinski M.I."/>
            <person name="Kwon-Chung K.J."/>
            <person name="Lengeler K.B."/>
            <person name="Maiti R."/>
            <person name="Marra M.A."/>
            <person name="Marra R.E."/>
            <person name="Mathewson C.A."/>
            <person name="Mitchell T.G."/>
            <person name="Pertea M."/>
            <person name="Riggs F.R."/>
            <person name="Salzberg S.L."/>
            <person name="Schein J.E."/>
            <person name="Shvartsbeyn A."/>
            <person name="Shin H."/>
            <person name="Shumway M."/>
            <person name="Specht C.A."/>
            <person name="Suh B.B."/>
            <person name="Tenney A."/>
            <person name="Utterback T.R."/>
            <person name="Wickes B.L."/>
            <person name="Wortman J.R."/>
            <person name="Wye N.H."/>
            <person name="Kronstad J.W."/>
            <person name="Lodge J.K."/>
            <person name="Heitman J."/>
            <person name="Davis R.W."/>
            <person name="Fraser C.M."/>
            <person name="Hyman R.W."/>
        </authorList>
    </citation>
    <scope>NUCLEOTIDE SEQUENCE [LARGE SCALE GENOMIC DNA]</scope>
    <source>
        <strain>B-3501A</strain>
    </source>
</reference>
<proteinExistence type="inferred from homology"/>
<comment type="function">
    <text evidence="1">Component of the cytosolic iron-sulfur (Fe-S) protein assembly (CIA) machinery required for the maturation of extramitochondrial Fe-S proteins. Part of an electron transfer chain functioning in an early step of cytosolic Fe-S biogenesis, facilitating the de novo assembly of a [4Fe-4S] cluster on the scaffold complex CFD1-NBP35. Electrons are transferred to DRE2 from NADPH via the FAD- and FMN-containing protein TAH18. TAH18-DRE2 are also required for the assembly of the diferric tyrosyl radical cofactor of ribonucleotide reductase (RNR), probably by providing electrons for reduction during radical cofactor maturation in the catalytic small subunit RNR2.</text>
</comment>
<comment type="cofactor">
    <cofactor evidence="1">
        <name>[2Fe-2S] cluster</name>
        <dbReference type="ChEBI" id="CHEBI:190135"/>
    </cofactor>
</comment>
<comment type="cofactor">
    <cofactor evidence="1">
        <name>[4Fe-4S] cluster</name>
        <dbReference type="ChEBI" id="CHEBI:49883"/>
    </cofactor>
</comment>
<comment type="subunit">
    <text evidence="1">Monomer. Interacts with TAH18. Interacts with MIA40.</text>
</comment>
<comment type="subcellular location">
    <subcellularLocation>
        <location evidence="1">Cytoplasm</location>
    </subcellularLocation>
    <subcellularLocation>
        <location evidence="1">Mitochondrion intermembrane space</location>
    </subcellularLocation>
</comment>
<comment type="domain">
    <text evidence="1">The C-terminal domain binds 2 Fe-S clusters but is otherwise mostly in an intrinsically disordered conformation.</text>
</comment>
<comment type="domain">
    <text evidence="1">The N-terminal domain has structural similarity with S-adenosyl-L-methionine-dependent methyltransferases, but does not bind S-adenosyl-L-methionine. It is required for correct assembly of the 2 Fe-S clusters.</text>
</comment>
<comment type="domain">
    <text evidence="1">The twin Cx2C motifs are involved in the recognition by the mitochondrial MIA40-ERV1 disulfide relay system. The formation of 2 disulfide bonds in the Cx2C motifs through dithiol/disulfide exchange reactions effectively traps the protein in the mitochondrial intermembrane space.</text>
</comment>
<comment type="similarity">
    <text evidence="1">Belongs to the anamorsin family.</text>
</comment>
<dbReference type="EMBL" id="AAEY01000014">
    <property type="protein sequence ID" value="EAL21855.1"/>
    <property type="molecule type" value="Genomic_DNA"/>
</dbReference>
<dbReference type="RefSeq" id="XP_776502.1">
    <property type="nucleotide sequence ID" value="XM_771409.1"/>
</dbReference>
<dbReference type="SMR" id="P0CM13"/>
<dbReference type="GeneID" id="4935093"/>
<dbReference type="KEGG" id="cnb:CNBC4280"/>
<dbReference type="VEuPathDB" id="FungiDB:CNBC4280"/>
<dbReference type="HOGENOM" id="CLU_054098_0_0_1"/>
<dbReference type="OrthoDB" id="5309at5206"/>
<dbReference type="GO" id="GO:0005758">
    <property type="term" value="C:mitochondrial intermembrane space"/>
    <property type="evidence" value="ECO:0007669"/>
    <property type="project" value="UniProtKB-SubCell"/>
</dbReference>
<dbReference type="GO" id="GO:0051537">
    <property type="term" value="F:2 iron, 2 sulfur cluster binding"/>
    <property type="evidence" value="ECO:0007669"/>
    <property type="project" value="UniProtKB-UniRule"/>
</dbReference>
<dbReference type="GO" id="GO:0051539">
    <property type="term" value="F:4 iron, 4 sulfur cluster binding"/>
    <property type="evidence" value="ECO:0007669"/>
    <property type="project" value="UniProtKB-KW"/>
</dbReference>
<dbReference type="GO" id="GO:0009055">
    <property type="term" value="F:electron transfer activity"/>
    <property type="evidence" value="ECO:0007669"/>
    <property type="project" value="UniProtKB-UniRule"/>
</dbReference>
<dbReference type="GO" id="GO:0046872">
    <property type="term" value="F:metal ion binding"/>
    <property type="evidence" value="ECO:0007669"/>
    <property type="project" value="UniProtKB-KW"/>
</dbReference>
<dbReference type="GO" id="GO:0016226">
    <property type="term" value="P:iron-sulfur cluster assembly"/>
    <property type="evidence" value="ECO:0007669"/>
    <property type="project" value="UniProtKB-UniRule"/>
</dbReference>
<dbReference type="HAMAP" id="MF_03115">
    <property type="entry name" value="Anamorsin"/>
    <property type="match status" value="1"/>
</dbReference>
<dbReference type="InterPro" id="IPR007785">
    <property type="entry name" value="Anamorsin"/>
</dbReference>
<dbReference type="InterPro" id="IPR046408">
    <property type="entry name" value="CIAPIN1"/>
</dbReference>
<dbReference type="PANTHER" id="PTHR13273">
    <property type="entry name" value="ANAMORSIN"/>
    <property type="match status" value="1"/>
</dbReference>
<dbReference type="PANTHER" id="PTHR13273:SF14">
    <property type="entry name" value="ANAMORSIN"/>
    <property type="match status" value="1"/>
</dbReference>
<dbReference type="Pfam" id="PF05093">
    <property type="entry name" value="CIAPIN1"/>
    <property type="match status" value="1"/>
</dbReference>
<organism>
    <name type="scientific">Cryptococcus neoformans var. neoformans serotype D (strain B-3501A)</name>
    <name type="common">Filobasidiella neoformans</name>
    <dbReference type="NCBI Taxonomy" id="283643"/>
    <lineage>
        <taxon>Eukaryota</taxon>
        <taxon>Fungi</taxon>
        <taxon>Dikarya</taxon>
        <taxon>Basidiomycota</taxon>
        <taxon>Agaricomycotina</taxon>
        <taxon>Tremellomycetes</taxon>
        <taxon>Tremellales</taxon>
        <taxon>Cryptococcaceae</taxon>
        <taxon>Cryptococcus</taxon>
        <taxon>Cryptococcus neoformans species complex</taxon>
    </lineage>
</organism>
<name>DRE2_CRYNB</name>
<accession>P0CM13</accession>
<accession>Q55VQ8</accession>
<accession>Q5KKI1</accession>
<gene>
    <name evidence="1" type="primary">DRE2</name>
    <name type="ordered locus">CNBC4280</name>
</gene>
<sequence length="321" mass="33794">MPAPVPPTAFAQPSGPATQLVLGSMQRAPEYQALLTSLKSAAPPSSSVQGEMVDRILDNATTLPPPPLTIHLVLPLPLPPNLLSAIPPSTQIFIHIPADSESQLGALHSALASHSFTPVLPTPSPSTLAYTSPSAPSLPTVASDPSPAPSSSTPVTLSGARPLQLRRNGDKARKAALWAIDSPLIPDGGKSLLTPADRTRPDCVFPAENGKPVKRRRACKDCTCGLKELEQEEEAQTSAAVQEAQKAFFLEGDDDIPENLKKATEGMEGIWPADKRAEAKKTSSCGSCYLGDAFRCSSCPYLGLPPFKPGEQVQVSIGDDI</sequence>